<sequence length="758" mass="88387">MRSVRSSSRTPKPVKRFVFDEDEDLEEIDLDEVDNADFEREDDEEEVLSEPSESPYTSTPKSSKRVNKTRGTKDFFKKDESLQLFRFVLNECRSQKPGRVGRVAKKRVGVNSMKYWERYKREIQGYRLPKQYRYHYSFYSKCFYKVLGLTPEEKVDLYYACEMPVVTDAEKQWLVEQFHVEFDEFGVIIGSDVCTHWDEEHSDSEDDSGKKEEKAREVSRYTEYHDDMMWKFIVDKISEGAQPIIDKHPIWDEFVKLNEENDVISKKSGRNHYDRFRRILVPNLHFMPYDDFTKAVLYERLEYPIPEEYRKILFTTTGADINESGFIEYLPPSTIHQISPIVPIPCHKSNPKFSQLKEPKDLILWSERKKFTPREDSQIWEFVRRKCVDSAGIFVKNDVLRGRGTLFFKDFRNTERKYESITQRFVVLRKLIMDTDYSLKQKLEIYYAISQPVDEDALDAFKSIACLVLNPDGTIRFAISKSFLIGRISDEPAKLEAENYSYVYDLFIFNETFGTAENPEPLCSVSQNRAEKFMLVSQLVFRFISRFEALEDRRIAWITPNAQVAPKEPVPAPSKKKSAFEAYQSSPQTFDTIQRFSTKRPFFCGDNFQIPPKKPFLAEEDVKLEPMEYENSEQIVENAEIKLEPAEELLDAETVTVEEFLMNSYSTAAPSTSTAPAPPKAPVTAPPAPQKSAQLLGKIDFAIGKMRENFDRFLQFAQQNSADLTVVQRYRYDAQMQQMTEKFTKDVSKVLSGDSIKR</sequence>
<dbReference type="EMBL" id="BX284602">
    <property type="protein sequence ID" value="CCD70880.1"/>
    <property type="molecule type" value="Genomic_DNA"/>
</dbReference>
<dbReference type="EMBL" id="AF408762">
    <property type="protein sequence ID" value="AAO27841.1"/>
    <property type="molecule type" value="mRNA"/>
</dbReference>
<dbReference type="PIR" id="T33514">
    <property type="entry name" value="T33514"/>
</dbReference>
<dbReference type="RefSeq" id="NP_494285.2">
    <property type="nucleotide sequence ID" value="NM_061884.5"/>
</dbReference>
<dbReference type="SMR" id="Q9TZI4"/>
<dbReference type="FunCoup" id="Q9TZI4">
    <property type="interactions" value="271"/>
</dbReference>
<dbReference type="IntAct" id="Q9TZI4">
    <property type="interactions" value="1"/>
</dbReference>
<dbReference type="STRING" id="6239.F59H5.1.1"/>
<dbReference type="PaxDb" id="6239-F59H5.1"/>
<dbReference type="PeptideAtlas" id="Q9TZI4"/>
<dbReference type="EnsemblMetazoa" id="F59H5.1.1">
    <property type="protein sequence ID" value="F59H5.1.1"/>
    <property type="gene ID" value="WBGene00019130"/>
</dbReference>
<dbReference type="GeneID" id="173603"/>
<dbReference type="KEGG" id="cel:CELE_F59H5.1"/>
<dbReference type="UCSC" id="F59H5.1">
    <property type="organism name" value="c. elegans"/>
</dbReference>
<dbReference type="AGR" id="WB:WBGene00019130"/>
<dbReference type="CTD" id="173603"/>
<dbReference type="WormBase" id="F59H5.1">
    <property type="protein sequence ID" value="CE31963"/>
    <property type="gene ID" value="WBGene00019130"/>
    <property type="gene designation" value="gbas-1"/>
</dbReference>
<dbReference type="eggNOG" id="ENOG502T72K">
    <property type="taxonomic scope" value="Eukaryota"/>
</dbReference>
<dbReference type="GeneTree" id="ENSGT00970000196179"/>
<dbReference type="HOGENOM" id="CLU_367708_0_0_1"/>
<dbReference type="InParanoid" id="Q9TZI4"/>
<dbReference type="OMA" id="EPMEYEN"/>
<dbReference type="OrthoDB" id="10645986at2759"/>
<dbReference type="PhylomeDB" id="Q9TZI4"/>
<dbReference type="PRO" id="PR:Q9TZI4"/>
<dbReference type="Proteomes" id="UP000001940">
    <property type="component" value="Chromosome II"/>
</dbReference>
<dbReference type="Bgee" id="WBGene00019130">
    <property type="expression patterns" value="Expressed in germ line (C elegans) and 4 other cell types or tissues"/>
</dbReference>
<dbReference type="GO" id="GO:0001965">
    <property type="term" value="F:G-protein alpha-subunit binding"/>
    <property type="evidence" value="ECO:0000314"/>
    <property type="project" value="UniProtKB"/>
</dbReference>
<dbReference type="GO" id="GO:0005085">
    <property type="term" value="F:guanyl-nucleotide exchange factor activity"/>
    <property type="evidence" value="ECO:0000314"/>
    <property type="project" value="UniProtKB"/>
</dbReference>
<dbReference type="GO" id="GO:0007264">
    <property type="term" value="P:small GTPase-mediated signal transduction"/>
    <property type="evidence" value="ECO:0000314"/>
    <property type="project" value="UniProtKB"/>
</dbReference>
<dbReference type="InterPro" id="IPR053367">
    <property type="entry name" value="G-alpha_activating_GEF"/>
</dbReference>
<dbReference type="InterPro" id="IPR006570">
    <property type="entry name" value="SPK_dom"/>
</dbReference>
<dbReference type="PANTHER" id="PTHR38627:SF1">
    <property type="entry name" value="G-PROTEIN ALPHA SUBUNIT ACTIVATING PROTEIN GBAS-1-RELATED"/>
    <property type="match status" value="1"/>
</dbReference>
<dbReference type="PANTHER" id="PTHR38627">
    <property type="entry name" value="GA BINDING AND ACTIVATING AND SPK (SPK) DOMAIN CONTAINING-RELATED"/>
    <property type="match status" value="1"/>
</dbReference>
<dbReference type="SMART" id="SM00583">
    <property type="entry name" value="SPK"/>
    <property type="match status" value="1"/>
</dbReference>
<keyword id="KW-0344">Guanine-nucleotide releasing factor</keyword>
<keyword id="KW-1185">Reference proteome</keyword>
<organism evidence="6">
    <name type="scientific">Caenorhabditis elegans</name>
    <dbReference type="NCBI Taxonomy" id="6239"/>
    <lineage>
        <taxon>Eukaryota</taxon>
        <taxon>Metazoa</taxon>
        <taxon>Ecdysozoa</taxon>
        <taxon>Nematoda</taxon>
        <taxon>Chromadorea</taxon>
        <taxon>Rhabditida</taxon>
        <taxon>Rhabditina</taxon>
        <taxon>Rhabditomorpha</taxon>
        <taxon>Rhabditoidea</taxon>
        <taxon>Rhabditidae</taxon>
        <taxon>Peloderinae</taxon>
        <taxon>Caenorhabditis</taxon>
    </lineage>
</organism>
<proteinExistence type="evidence at protein level"/>
<evidence type="ECO:0000256" key="1">
    <source>
        <dbReference type="SAM" id="MobiDB-lite"/>
    </source>
</evidence>
<evidence type="ECO:0000269" key="2">
    <source>
    </source>
</evidence>
<evidence type="ECO:0000269" key="3">
    <source>
    </source>
</evidence>
<evidence type="ECO:0000305" key="4"/>
<evidence type="ECO:0000312" key="5">
    <source>
        <dbReference type="EMBL" id="AAO27841.1"/>
    </source>
</evidence>
<evidence type="ECO:0000312" key="6">
    <source>
        <dbReference type="Proteomes" id="UP000001940"/>
    </source>
</evidence>
<evidence type="ECO:0000312" key="7">
    <source>
        <dbReference type="WormBase" id="F59H5.1"/>
    </source>
</evidence>
<reference evidence="6" key="1">
    <citation type="journal article" date="1998" name="Science">
        <title>Genome sequence of the nematode C. elegans: a platform for investigating biology.</title>
        <authorList>
            <consortium name="The C. elegans sequencing consortium"/>
        </authorList>
    </citation>
    <scope>NUCLEOTIDE SEQUENCE [LARGE SCALE GENOMIC DNA]</scope>
    <source>
        <strain evidence="6">Bristol N2</strain>
    </source>
</reference>
<reference evidence="5" key="2">
    <citation type="journal article" date="2003" name="Comp. Funct. Genomics">
        <title>Proteins interacting with Caenorhabditis elegans Galpha subunits.</title>
        <authorList>
            <person name="Cuppen E."/>
            <person name="van der Linden A.M."/>
            <person name="Jansen G."/>
            <person name="Plasterk R.H."/>
        </authorList>
    </citation>
    <scope>NUCLEOTIDE SEQUENCE [MRNA] OF 517-758</scope>
    <scope>INTERACTION WITH GOA-1</scope>
</reference>
<reference evidence="4" key="3">
    <citation type="journal article" date="2016" name="Mol. Biol. Evol.">
        <title>Evolutionary conservation of a GPCR-independent mechanism of trimeric G protein activation.</title>
        <authorList>
            <person name="Coleman B.D."/>
            <person name="Marivin A."/>
            <person name="Parag-Sharma K."/>
            <person name="DiGiacomo V."/>
            <person name="Kim S."/>
            <person name="Pepper J.S."/>
            <person name="Casler J."/>
            <person name="Nguyen L.T."/>
            <person name="Koelle M.R."/>
            <person name="Garcia-Marcos M."/>
        </authorList>
    </citation>
    <scope>FUNCTION</scope>
    <scope>INTERACTION WITH GOA-1</scope>
    <scope>TISSUE SPECIFICITY</scope>
    <scope>GBA MOTIF</scope>
    <scope>MUTAGENESIS OF 337-GLN--ARG-758; 575-LYS--ARG-758; VAL-657; PHE-660 AND LEU-661</scope>
</reference>
<accession>Q9TZI4</accession>
<accession>Q86RS8</accession>
<gene>
    <name evidence="7" type="primary">gbas-1</name>
    <name evidence="7" type="ORF">F59H5.1</name>
</gene>
<name>GBAS1_CAEEL</name>
<feature type="chain" id="PRO_0000448585" description="G-protein alpha subunit activating protein gbas-1">
    <location>
        <begin position="1"/>
        <end position="758"/>
    </location>
</feature>
<feature type="region of interest" description="Disordered" evidence="1">
    <location>
        <begin position="30"/>
        <end position="70"/>
    </location>
</feature>
<feature type="region of interest" description="Disordered" evidence="1">
    <location>
        <begin position="668"/>
        <end position="690"/>
    </location>
</feature>
<feature type="short sequence motif" description="GBA" evidence="3">
    <location>
        <begin position="653"/>
        <end position="666"/>
    </location>
</feature>
<feature type="compositionally biased region" description="Acidic residues" evidence="1">
    <location>
        <begin position="30"/>
        <end position="48"/>
    </location>
</feature>
<feature type="compositionally biased region" description="Low complexity" evidence="1">
    <location>
        <begin position="49"/>
        <end position="61"/>
    </location>
</feature>
<feature type="compositionally biased region" description="Pro residues" evidence="1">
    <location>
        <begin position="676"/>
        <end position="689"/>
    </location>
</feature>
<feature type="mutagenesis site" description="In gk136226; no major changes in egg-laying behavior with mutants shutting off egg laying during starvation and resuming egg laying when re-fed as in wild-type animals. Mutants show a decrease in the number of laid eggs under fed and re-fed conditions." evidence="3">
    <location>
        <begin position="337"/>
        <end position="758"/>
    </location>
</feature>
<feature type="mutagenesis site" description="In gk578844; no major changes in egg-laying behavior with mutants shutting off egg laying during starvation and resuming egg laying when re-fed as in wild-type animals. Mutants show a decrease in the number of laid eggs under fed and re-fed conditions." evidence="3">
    <location>
        <begin position="575"/>
        <end position="758"/>
    </location>
</feature>
<feature type="mutagenesis site" description="Impairs binding to goa-1." evidence="3">
    <original>V</original>
    <variation>A</variation>
    <location>
        <position position="657"/>
    </location>
</feature>
<feature type="mutagenesis site" description="Abolishes binding to goa-1 and ability of gbas-1 to activate goa-1." evidence="3">
    <original>F</original>
    <variation>A</variation>
    <location>
        <position position="660"/>
    </location>
</feature>
<feature type="mutagenesis site" description="Abolishes binding to goa-1." evidence="3">
    <original>L</original>
    <variation>A</variation>
    <location>
        <position position="661"/>
    </location>
</feature>
<comment type="function">
    <text evidence="3">Acts as a non-receptor guanine nucleotide exchange factor which binds to and activates G-protein alpha subunit goa-1.</text>
</comment>
<comment type="subunit">
    <text evidence="2 3">Interacts (via GBA motif) with guanine nucleotide-binding protein G(o) subunit alpha goa-1 (in GDP-bound form); the interaction leads to activation of goa-1.</text>
</comment>
<comment type="interaction">
    <interactant intactId="EBI-6094450">
        <id>Q9TZI4</id>
    </interactant>
    <interactant intactId="EBI-316062">
        <id>P51875</id>
        <label>goa-1</label>
    </interactant>
    <organismsDiffer>false</organismsDiffer>
    <experiments>3</experiments>
</comment>
<comment type="tissue specificity">
    <text evidence="3">Expressed in some neurons including the head and tail neurons, HSN and VC, in a subset of glial cells, in the distal tips cells and in the intestine.</text>
</comment>
<comment type="domain">
    <text evidence="3">The GBA (G-alpha binding and activating) motif mediates binding to the alpha subunits of guanine nucleotide-binding proteins (G proteins).</text>
</comment>
<protein>
    <recommendedName>
        <fullName evidence="4">G-protein alpha subunit activating protein gbas-1</fullName>
    </recommendedName>
</protein>